<accession>Q2IXQ7</accession>
<protein>
    <recommendedName>
        <fullName evidence="1">Large ribosomal subunit protein uL2</fullName>
    </recommendedName>
    <alternativeName>
        <fullName evidence="3">50S ribosomal protein L2</fullName>
    </alternativeName>
</protein>
<comment type="function">
    <text evidence="1">One of the primary rRNA binding proteins. Required for association of the 30S and 50S subunits to form the 70S ribosome, for tRNA binding and peptide bond formation. It has been suggested to have peptidyltransferase activity; this is somewhat controversial. Makes several contacts with the 16S rRNA in the 70S ribosome.</text>
</comment>
<comment type="subunit">
    <text evidence="1">Part of the 50S ribosomal subunit. Forms a bridge to the 30S subunit in the 70S ribosome.</text>
</comment>
<comment type="similarity">
    <text evidence="1">Belongs to the universal ribosomal protein uL2 family.</text>
</comment>
<sequence length="278" mass="30692">MALKKYNPTTPGQRQLVMVDRSALYKGKPVKTLTEGKHSNGGRNNTGRITVRFRGGGHKKTYRLVDFKRTKVDVPAKVERLEYDPNRTAFIALIKYEDGEQAYILAPQRLAVGDTVIAGAYVDVKPGNVMPLGNMPIGTIVHNVELKIGKGGQIARSAGTYAQLVGRDHDYVIMRLNSGEQRLVHGRCTATIGAVSNPDHMNISIGKAGRTRWLGWRPHNRGVVMNPIDHPHGGGEGRTSGGRHPVTPWGKPTKGKKTRSNKSTDKFILISRHKRKKK</sequence>
<keyword id="KW-1185">Reference proteome</keyword>
<keyword id="KW-0687">Ribonucleoprotein</keyword>
<keyword id="KW-0689">Ribosomal protein</keyword>
<keyword id="KW-0694">RNA-binding</keyword>
<keyword id="KW-0699">rRNA-binding</keyword>
<feature type="chain" id="PRO_0000310002" description="Large ribosomal subunit protein uL2">
    <location>
        <begin position="1"/>
        <end position="278"/>
    </location>
</feature>
<feature type="region of interest" description="Disordered" evidence="2">
    <location>
        <begin position="226"/>
        <end position="278"/>
    </location>
</feature>
<gene>
    <name evidence="1" type="primary">rplB</name>
    <name type="ordered locus">RPB_2298</name>
</gene>
<dbReference type="EMBL" id="CP000250">
    <property type="protein sequence ID" value="ABD07003.1"/>
    <property type="molecule type" value="Genomic_DNA"/>
</dbReference>
<dbReference type="RefSeq" id="WP_011441188.1">
    <property type="nucleotide sequence ID" value="NC_007778.1"/>
</dbReference>
<dbReference type="SMR" id="Q2IXQ7"/>
<dbReference type="STRING" id="316058.RPB_2298"/>
<dbReference type="KEGG" id="rpb:RPB_2298"/>
<dbReference type="eggNOG" id="COG0090">
    <property type="taxonomic scope" value="Bacteria"/>
</dbReference>
<dbReference type="HOGENOM" id="CLU_036235_2_1_5"/>
<dbReference type="OrthoDB" id="9778722at2"/>
<dbReference type="Proteomes" id="UP000008809">
    <property type="component" value="Chromosome"/>
</dbReference>
<dbReference type="GO" id="GO:0015934">
    <property type="term" value="C:large ribosomal subunit"/>
    <property type="evidence" value="ECO:0007669"/>
    <property type="project" value="InterPro"/>
</dbReference>
<dbReference type="GO" id="GO:0019843">
    <property type="term" value="F:rRNA binding"/>
    <property type="evidence" value="ECO:0007669"/>
    <property type="project" value="UniProtKB-UniRule"/>
</dbReference>
<dbReference type="GO" id="GO:0003735">
    <property type="term" value="F:structural constituent of ribosome"/>
    <property type="evidence" value="ECO:0007669"/>
    <property type="project" value="InterPro"/>
</dbReference>
<dbReference type="GO" id="GO:0016740">
    <property type="term" value="F:transferase activity"/>
    <property type="evidence" value="ECO:0007669"/>
    <property type="project" value="InterPro"/>
</dbReference>
<dbReference type="GO" id="GO:0002181">
    <property type="term" value="P:cytoplasmic translation"/>
    <property type="evidence" value="ECO:0007669"/>
    <property type="project" value="TreeGrafter"/>
</dbReference>
<dbReference type="FunFam" id="2.30.30.30:FF:000055">
    <property type="entry name" value="50S ribosomal protein L2"/>
    <property type="match status" value="1"/>
</dbReference>
<dbReference type="FunFam" id="2.40.50.140:FF:000003">
    <property type="entry name" value="50S ribosomal protein L2"/>
    <property type="match status" value="1"/>
</dbReference>
<dbReference type="FunFam" id="4.10.950.10:FF:000001">
    <property type="entry name" value="50S ribosomal protein L2"/>
    <property type="match status" value="1"/>
</dbReference>
<dbReference type="Gene3D" id="2.30.30.30">
    <property type="match status" value="1"/>
</dbReference>
<dbReference type="Gene3D" id="2.40.50.140">
    <property type="entry name" value="Nucleic acid-binding proteins"/>
    <property type="match status" value="1"/>
</dbReference>
<dbReference type="Gene3D" id="4.10.950.10">
    <property type="entry name" value="Ribosomal protein L2, domain 3"/>
    <property type="match status" value="1"/>
</dbReference>
<dbReference type="HAMAP" id="MF_01320_B">
    <property type="entry name" value="Ribosomal_uL2_B"/>
    <property type="match status" value="1"/>
</dbReference>
<dbReference type="InterPro" id="IPR012340">
    <property type="entry name" value="NA-bd_OB-fold"/>
</dbReference>
<dbReference type="InterPro" id="IPR014722">
    <property type="entry name" value="Rib_uL2_dom2"/>
</dbReference>
<dbReference type="InterPro" id="IPR002171">
    <property type="entry name" value="Ribosomal_uL2"/>
</dbReference>
<dbReference type="InterPro" id="IPR005880">
    <property type="entry name" value="Ribosomal_uL2_bac/org-type"/>
</dbReference>
<dbReference type="InterPro" id="IPR022669">
    <property type="entry name" value="Ribosomal_uL2_C"/>
</dbReference>
<dbReference type="InterPro" id="IPR022671">
    <property type="entry name" value="Ribosomal_uL2_CS"/>
</dbReference>
<dbReference type="InterPro" id="IPR014726">
    <property type="entry name" value="Ribosomal_uL2_dom3"/>
</dbReference>
<dbReference type="InterPro" id="IPR022666">
    <property type="entry name" value="Ribosomal_uL2_RNA-bd_dom"/>
</dbReference>
<dbReference type="InterPro" id="IPR008991">
    <property type="entry name" value="Translation_prot_SH3-like_sf"/>
</dbReference>
<dbReference type="NCBIfam" id="TIGR01171">
    <property type="entry name" value="rplB_bact"/>
    <property type="match status" value="1"/>
</dbReference>
<dbReference type="PANTHER" id="PTHR13691:SF5">
    <property type="entry name" value="LARGE RIBOSOMAL SUBUNIT PROTEIN UL2M"/>
    <property type="match status" value="1"/>
</dbReference>
<dbReference type="PANTHER" id="PTHR13691">
    <property type="entry name" value="RIBOSOMAL PROTEIN L2"/>
    <property type="match status" value="1"/>
</dbReference>
<dbReference type="Pfam" id="PF00181">
    <property type="entry name" value="Ribosomal_L2"/>
    <property type="match status" value="1"/>
</dbReference>
<dbReference type="Pfam" id="PF03947">
    <property type="entry name" value="Ribosomal_L2_C"/>
    <property type="match status" value="1"/>
</dbReference>
<dbReference type="PIRSF" id="PIRSF002158">
    <property type="entry name" value="Ribosomal_L2"/>
    <property type="match status" value="1"/>
</dbReference>
<dbReference type="SMART" id="SM01383">
    <property type="entry name" value="Ribosomal_L2"/>
    <property type="match status" value="1"/>
</dbReference>
<dbReference type="SMART" id="SM01382">
    <property type="entry name" value="Ribosomal_L2_C"/>
    <property type="match status" value="1"/>
</dbReference>
<dbReference type="SUPFAM" id="SSF50249">
    <property type="entry name" value="Nucleic acid-binding proteins"/>
    <property type="match status" value="1"/>
</dbReference>
<dbReference type="SUPFAM" id="SSF50104">
    <property type="entry name" value="Translation proteins SH3-like domain"/>
    <property type="match status" value="1"/>
</dbReference>
<dbReference type="PROSITE" id="PS00467">
    <property type="entry name" value="RIBOSOMAL_L2"/>
    <property type="match status" value="1"/>
</dbReference>
<reference key="1">
    <citation type="submission" date="2006-01" db="EMBL/GenBank/DDBJ databases">
        <title>Complete sequence of Rhodopseudomonas palustris HaA2.</title>
        <authorList>
            <consortium name="US DOE Joint Genome Institute"/>
            <person name="Copeland A."/>
            <person name="Lucas S."/>
            <person name="Lapidus A."/>
            <person name="Barry K."/>
            <person name="Detter J.C."/>
            <person name="Glavina T."/>
            <person name="Hammon N."/>
            <person name="Israni S."/>
            <person name="Pitluck S."/>
            <person name="Chain P."/>
            <person name="Malfatti S."/>
            <person name="Shin M."/>
            <person name="Vergez L."/>
            <person name="Schmutz J."/>
            <person name="Larimer F."/>
            <person name="Land M."/>
            <person name="Hauser L."/>
            <person name="Pelletier D.A."/>
            <person name="Kyrpides N."/>
            <person name="Anderson I."/>
            <person name="Oda Y."/>
            <person name="Harwood C.S."/>
            <person name="Richardson P."/>
        </authorList>
    </citation>
    <scope>NUCLEOTIDE SEQUENCE [LARGE SCALE GENOMIC DNA]</scope>
    <source>
        <strain>HaA2</strain>
    </source>
</reference>
<evidence type="ECO:0000255" key="1">
    <source>
        <dbReference type="HAMAP-Rule" id="MF_01320"/>
    </source>
</evidence>
<evidence type="ECO:0000256" key="2">
    <source>
        <dbReference type="SAM" id="MobiDB-lite"/>
    </source>
</evidence>
<evidence type="ECO:0000305" key="3"/>
<proteinExistence type="inferred from homology"/>
<organism>
    <name type="scientific">Rhodopseudomonas palustris (strain HaA2)</name>
    <dbReference type="NCBI Taxonomy" id="316058"/>
    <lineage>
        <taxon>Bacteria</taxon>
        <taxon>Pseudomonadati</taxon>
        <taxon>Pseudomonadota</taxon>
        <taxon>Alphaproteobacteria</taxon>
        <taxon>Hyphomicrobiales</taxon>
        <taxon>Nitrobacteraceae</taxon>
        <taxon>Rhodopseudomonas</taxon>
    </lineage>
</organism>
<name>RL2_RHOP2</name>